<dbReference type="EMBL" id="AJ938182">
    <property type="protein sequence ID" value="CAI81856.1"/>
    <property type="molecule type" value="Genomic_DNA"/>
</dbReference>
<dbReference type="RefSeq" id="WP_000036076.1">
    <property type="nucleotide sequence ID" value="NC_007622.1"/>
</dbReference>
<dbReference type="SMR" id="Q2YYV0"/>
<dbReference type="KEGG" id="sab:SAB2167c"/>
<dbReference type="HOGENOM" id="CLU_164084_0_0_9"/>
<dbReference type="GO" id="GO:0005737">
    <property type="term" value="C:cytoplasm"/>
    <property type="evidence" value="ECO:0007669"/>
    <property type="project" value="UniProtKB-SubCell"/>
</dbReference>
<dbReference type="GO" id="GO:0003677">
    <property type="term" value="F:DNA binding"/>
    <property type="evidence" value="ECO:0007669"/>
    <property type="project" value="UniProtKB-KW"/>
</dbReference>
<dbReference type="GO" id="GO:0003700">
    <property type="term" value="F:DNA-binding transcription factor activity"/>
    <property type="evidence" value="ECO:0007669"/>
    <property type="project" value="InterPro"/>
</dbReference>
<dbReference type="GO" id="GO:0006950">
    <property type="term" value="P:response to stress"/>
    <property type="evidence" value="ECO:0007669"/>
    <property type="project" value="TreeGrafter"/>
</dbReference>
<dbReference type="FunFam" id="1.10.10.10:FF:000578">
    <property type="entry name" value="HTH-type transcriptional regulator SarR"/>
    <property type="match status" value="1"/>
</dbReference>
<dbReference type="Gene3D" id="1.10.10.10">
    <property type="entry name" value="Winged helix-like DNA-binding domain superfamily/Winged helix DNA-binding domain"/>
    <property type="match status" value="1"/>
</dbReference>
<dbReference type="InterPro" id="IPR039422">
    <property type="entry name" value="MarR/SlyA-like"/>
</dbReference>
<dbReference type="InterPro" id="IPR010166">
    <property type="entry name" value="SarA/Rot_dom"/>
</dbReference>
<dbReference type="InterPro" id="IPR055166">
    <property type="entry name" value="Transc_reg_Sar_Rot_HTH"/>
</dbReference>
<dbReference type="InterPro" id="IPR036388">
    <property type="entry name" value="WH-like_DNA-bd_sf"/>
</dbReference>
<dbReference type="InterPro" id="IPR036390">
    <property type="entry name" value="WH_DNA-bd_sf"/>
</dbReference>
<dbReference type="NCBIfam" id="TIGR01889">
    <property type="entry name" value="Staph_reg_Sar"/>
    <property type="match status" value="1"/>
</dbReference>
<dbReference type="PANTHER" id="PTHR33164:SF56">
    <property type="entry name" value="HTH-TYPE TRANSCRIPTIONAL REGULATOR MHQR"/>
    <property type="match status" value="1"/>
</dbReference>
<dbReference type="PANTHER" id="PTHR33164">
    <property type="entry name" value="TRANSCRIPTIONAL REGULATOR, MARR FAMILY"/>
    <property type="match status" value="1"/>
</dbReference>
<dbReference type="Pfam" id="PF22381">
    <property type="entry name" value="Staph_reg_Sar_Rot"/>
    <property type="match status" value="1"/>
</dbReference>
<dbReference type="SUPFAM" id="SSF46785">
    <property type="entry name" value="Winged helix' DNA-binding domain"/>
    <property type="match status" value="1"/>
</dbReference>
<accession>Q2YYV0</accession>
<proteinExistence type="inferred from homology"/>
<feature type="initiator methionine" description="Removed" evidence="1">
    <location>
        <position position="1"/>
    </location>
</feature>
<feature type="chain" id="PRO_0000240487" description="HTH-type transcriptional regulator SarR">
    <location>
        <begin position="2"/>
        <end position="115"/>
    </location>
</feature>
<feature type="DNA-binding region" description="H-T-H motif" evidence="2">
    <location>
        <begin position="51"/>
        <end position="74"/>
    </location>
</feature>
<sequence>MSKINDINDLVNATFQVKKFFRDTKKKFNLNYEEIYILNHILRSESNEISSKEIAKCSEFKPYYLTKALQKLKDLKLLSKKRSLQDERTVIVYVTDTQKANIQKLISELEEYIKN</sequence>
<organism>
    <name type="scientific">Staphylococcus aureus (strain bovine RF122 / ET3-1)</name>
    <dbReference type="NCBI Taxonomy" id="273036"/>
    <lineage>
        <taxon>Bacteria</taxon>
        <taxon>Bacillati</taxon>
        <taxon>Bacillota</taxon>
        <taxon>Bacilli</taxon>
        <taxon>Bacillales</taxon>
        <taxon>Staphylococcaceae</taxon>
        <taxon>Staphylococcus</taxon>
    </lineage>
</organism>
<comment type="function">
    <text evidence="1">Negative regulator of sarA transcription at late exponential and stationary growth phases. It contributes to the modulation of target genes downstream of the sarA regulatory cascade. Also, positively regulates expression of primary transcripts RNAII and RNAIII generated by agr (virulence accessory gene regulator) locus (By similarity).</text>
</comment>
<comment type="subunit">
    <text evidence="1">Homodimer.</text>
</comment>
<comment type="subcellular location">
    <subcellularLocation>
        <location evidence="1">Cytoplasm</location>
    </subcellularLocation>
</comment>
<comment type="similarity">
    <text evidence="3">Belongs to the SarA family.</text>
</comment>
<gene>
    <name type="primary">sarR</name>
    <name type="ordered locus">SAB2167c</name>
</gene>
<name>SARR_STAAB</name>
<reference key="1">
    <citation type="journal article" date="2007" name="PLoS ONE">
        <title>Molecular correlates of host specialization in Staphylococcus aureus.</title>
        <authorList>
            <person name="Herron-Olson L."/>
            <person name="Fitzgerald J.R."/>
            <person name="Musser J.M."/>
            <person name="Kapur V."/>
        </authorList>
    </citation>
    <scope>NUCLEOTIDE SEQUENCE [LARGE SCALE GENOMIC DNA]</scope>
    <source>
        <strain>bovine RF122 / ET3-1</strain>
    </source>
</reference>
<keyword id="KW-0010">Activator</keyword>
<keyword id="KW-0963">Cytoplasm</keyword>
<keyword id="KW-0238">DNA-binding</keyword>
<keyword id="KW-0678">Repressor</keyword>
<keyword id="KW-0804">Transcription</keyword>
<keyword id="KW-0805">Transcription regulation</keyword>
<keyword id="KW-0843">Virulence</keyword>
<evidence type="ECO:0000250" key="1"/>
<evidence type="ECO:0000255" key="2"/>
<evidence type="ECO:0000305" key="3"/>
<protein>
    <recommendedName>
        <fullName>HTH-type transcriptional regulator SarR</fullName>
    </recommendedName>
    <alternativeName>
        <fullName>Staphylococcal accessory regulator R</fullName>
    </alternativeName>
</protein>